<organism>
    <name type="scientific">Homo sapiens</name>
    <name type="common">Human</name>
    <dbReference type="NCBI Taxonomy" id="9606"/>
    <lineage>
        <taxon>Eukaryota</taxon>
        <taxon>Metazoa</taxon>
        <taxon>Chordata</taxon>
        <taxon>Craniata</taxon>
        <taxon>Vertebrata</taxon>
        <taxon>Euteleostomi</taxon>
        <taxon>Mammalia</taxon>
        <taxon>Eutheria</taxon>
        <taxon>Euarchontoglires</taxon>
        <taxon>Primates</taxon>
        <taxon>Haplorrhini</taxon>
        <taxon>Catarrhini</taxon>
        <taxon>Hominidae</taxon>
        <taxon>Homo</taxon>
    </lineage>
</organism>
<sequence>MDLSNNTMSLSVRTPGLSRRLSSQSVIGRPRGMSASSVGSGYGGSAFGFGASCGGGFSAASMFGSSSGFGGGSGSSMAGGLGAGYGRALGGGSFGGLGMGFGGSPGGGSLGILSGNDGGLLSGSEKETMQNLNDRLASYLDKVRALEEANTELENKIREWYETRGTGTADASQSDYSKYYPLIEDLRNKIISASIGNAQLLLQIDNARLAAEDFRMKYENELALRQGVEADINGLRRVLDELTLTRTDLEMQIESLNEELAYMKKNHEDELQSFRVGGPGEVSVEMDAAPGVDLTRLLNDMRAQYETIAEQNRKDAEAWFIEKSGELRKEISTNTEQLQSSKSEVTDLRRAFQNLEIELQSQLAMKKSLEDSLAEAEGDYCAQLSQVQQLISNLEAQLLQVRADAERQNVDHQRLLNVKARLELEIETYRRLLDGEAQGDGLEESLFVTDSKSQAQSTDSSKDPTKTRKIKTVVQEMVNGEVVSSQVQEIEELM</sequence>
<proteinExistence type="evidence at protein level"/>
<accession>Q99456</accession>
<accession>B2R9E0</accession>
<protein>
    <recommendedName>
        <fullName>Keratin, type I cytoskeletal 12</fullName>
    </recommendedName>
    <alternativeName>
        <fullName>Cytokeratin-12</fullName>
        <shortName>CK-12</shortName>
    </alternativeName>
    <alternativeName>
        <fullName>Keratin-12</fullName>
        <shortName>K12</shortName>
    </alternativeName>
</protein>
<gene>
    <name type="primary">KRT12</name>
</gene>
<feature type="chain" id="PRO_0000063644" description="Keratin, type I cytoskeletal 12">
    <location>
        <begin position="1"/>
        <end position="494"/>
    </location>
</feature>
<feature type="domain" description="IF rod" evidence="1">
    <location>
        <begin position="125"/>
        <end position="440"/>
    </location>
</feature>
<feature type="region of interest" description="Head">
    <location>
        <begin position="1"/>
        <end position="124"/>
    </location>
</feature>
<feature type="region of interest" description="Disordered" evidence="2">
    <location>
        <begin position="1"/>
        <end position="32"/>
    </location>
</feature>
<feature type="region of interest" description="Coil 1A">
    <location>
        <begin position="125"/>
        <end position="160"/>
    </location>
</feature>
<feature type="region of interest" description="Linker 1">
    <location>
        <begin position="164"/>
        <end position="182"/>
    </location>
</feature>
<feature type="region of interest" description="Coil 1B">
    <location>
        <begin position="183"/>
        <end position="274"/>
    </location>
</feature>
<feature type="region of interest" description="Linker 12">
    <location>
        <begin position="275"/>
        <end position="297"/>
    </location>
</feature>
<feature type="region of interest" description="Coil 2">
    <location>
        <begin position="298"/>
        <end position="435"/>
    </location>
</feature>
<feature type="region of interest" description="Tail">
    <location>
        <begin position="436"/>
        <end position="494"/>
    </location>
</feature>
<feature type="region of interest" description="Disordered" evidence="2">
    <location>
        <begin position="446"/>
        <end position="468"/>
    </location>
</feature>
<feature type="compositionally biased region" description="Polar residues" evidence="2">
    <location>
        <begin position="1"/>
        <end position="12"/>
    </location>
</feature>
<feature type="compositionally biased region" description="Polar residues" evidence="2">
    <location>
        <begin position="448"/>
        <end position="459"/>
    </location>
</feature>
<feature type="sequence variant" id="VAR_049783" description="In dbSNP:rs11650915." evidence="11 13">
    <original>P</original>
    <variation>S</variation>
    <location>
        <position position="15"/>
    </location>
</feature>
<feature type="sequence variant" id="VAR_009547" description="In dbSNP:rs17566772." evidence="4 11">
    <original>R</original>
    <variation>W</variation>
    <location>
        <position position="20"/>
    </location>
</feature>
<feature type="sequence variant" id="VAR_013126" description="In MECD1; dbSNP:rs28936695." evidence="4 9">
    <original>M</original>
    <variation>T</variation>
    <location>
        <position position="129"/>
    </location>
</feature>
<feature type="sequence variant" id="VAR_072069" description="In MECD1; dbSNP:rs267607387." evidence="13">
    <original>M</original>
    <variation>V</variation>
    <location>
        <position position="129"/>
    </location>
</feature>
<feature type="sequence variant" id="VAR_013127" description="In MECD1; dbSNP:rs58864803." evidence="5">
    <original>Q</original>
    <variation>P</variation>
    <location>
        <position position="130"/>
    </location>
</feature>
<feature type="sequence variant" id="VAR_072070" description="In MECD1; increased expression of keratins KRT5, KRT6, KRT14 and KRT16 and decreased expression of KRT12 in the corneal epithelium; increased expression of DDIT3/CHOP and CASP12 in the corneal epithelium indicative of up-regulation of the unfolded protein response.; dbSNP:rs886038212." evidence="14 16">
    <original>L</original>
    <variation>P</variation>
    <location>
        <position position="132"/>
    </location>
</feature>
<feature type="sequence variant" id="VAR_083313" description="In MECD1." evidence="17">
    <original>L</original>
    <variation>V</variation>
    <location>
        <position position="132"/>
    </location>
</feature>
<feature type="sequence variant" id="VAR_008526" description="In MECD1; dbSNP:rs58410481." evidence="20">
    <original>R</original>
    <variation>G</variation>
    <location>
        <position position="135"/>
    </location>
</feature>
<feature type="sequence variant" id="VAR_008525" description="In MECD1; dbSNP:rs57218384." evidence="20">
    <original>R</original>
    <variation>I</variation>
    <location>
        <position position="135"/>
    </location>
</feature>
<feature type="sequence variant" id="VAR_031394" description="In MECD1; dbSNP:rs61282718." evidence="7">
    <original>R</original>
    <variation>S</variation>
    <location>
        <position position="135"/>
    </location>
</feature>
<feature type="sequence variant" id="VAR_003834" description="In MECD1; dbSNP:rs57218384." evidence="4 19">
    <original>R</original>
    <variation>T</variation>
    <location>
        <position position="135"/>
    </location>
</feature>
<feature type="sequence variant" id="VAR_031395" description="In MECD1; dbSNP:rs58038639." evidence="6">
    <original>A</original>
    <variation>P</variation>
    <location>
        <position position="137"/>
    </location>
</feature>
<feature type="sequence variant" id="VAR_072071" description="In MECD1." evidence="15">
    <original>L</original>
    <variation>Q</variation>
    <location>
        <position position="140"/>
    </location>
</feature>
<feature type="sequence variant" id="VAR_008527" description="In MECD1; dbSNP:rs58918655." evidence="20">
    <original>L</original>
    <variation>R</variation>
    <location>
        <position position="140"/>
    </location>
</feature>
<feature type="sequence variant" id="VAR_003835" description="In MECD1; dbSNP:rs58343600." evidence="11 19">
    <original>V</original>
    <variation>L</variation>
    <location>
        <position position="143"/>
    </location>
</feature>
<feature type="sequence variant" id="VAR_083314" description="In MECD1; uncertain significance; dbSNP:rs150674571." evidence="17">
    <original>D</original>
    <variation>N</variation>
    <location>
        <position position="248"/>
    </location>
</feature>
<feature type="sequence variant" id="VAR_031396" description="In MECD1.">
    <original>L</original>
    <variation>LISNLEAQLL</variation>
    <location>
        <position position="399"/>
    </location>
</feature>
<feature type="sequence variant" id="VAR_031397" description="In MECD1; dbSNP:rs59350319." evidence="9">
    <original>I</original>
    <variation>S</variation>
    <location>
        <position position="426"/>
    </location>
</feature>
<feature type="sequence variant" id="VAR_083315" description="In MECD1; uncertain significance; dbSNP:rs59465138." evidence="3">
    <original>I</original>
    <variation>V</variation>
    <location>
        <position position="426"/>
    </location>
</feature>
<feature type="sequence variant" id="VAR_031398" description="In MECD1; dbSNP:rs59202432." evidence="8">
    <original>Y</original>
    <variation>C</variation>
    <location>
        <position position="429"/>
    </location>
</feature>
<feature type="sequence variant" id="VAR_008528" description="In MECD1; dbSNP:rs58162394." evidence="20">
    <original>Y</original>
    <variation>D</variation>
    <location>
        <position position="429"/>
    </location>
</feature>
<feature type="sequence variant" id="VAR_072072" description="In MECD1; dbSNP:rs62635290." evidence="10">
    <original>R</original>
    <variation>P</variation>
    <location>
        <position position="430"/>
    </location>
</feature>
<feature type="sequence variant" id="VAR_072073" description="In MECD1; dbSNP:rs267607386." evidence="12">
    <original>L</original>
    <variation>R</variation>
    <location>
        <position position="433"/>
    </location>
</feature>
<dbReference type="EMBL" id="D78367">
    <property type="protein sequence ID" value="BAA11376.1"/>
    <property type="molecule type" value="mRNA"/>
</dbReference>
<dbReference type="EMBL" id="AB007119">
    <property type="protein sequence ID" value="BAA25063.1"/>
    <property type="molecule type" value="Genomic_DNA"/>
</dbReference>
<dbReference type="EMBL" id="AF137286">
    <property type="protein sequence ID" value="AAF61432.1"/>
    <property type="molecule type" value="Genomic_DNA"/>
</dbReference>
<dbReference type="EMBL" id="AK313747">
    <property type="protein sequence ID" value="BAG36487.1"/>
    <property type="molecule type" value="mRNA"/>
</dbReference>
<dbReference type="EMBL" id="CH471152">
    <property type="protein sequence ID" value="EAW60685.1"/>
    <property type="molecule type" value="Genomic_DNA"/>
</dbReference>
<dbReference type="CCDS" id="CCDS11378.1"/>
<dbReference type="RefSeq" id="NP_000214.1">
    <property type="nucleotide sequence ID" value="NM_000223.4"/>
</dbReference>
<dbReference type="SMR" id="Q99456"/>
<dbReference type="BioGRID" id="110057">
    <property type="interactions" value="22"/>
</dbReference>
<dbReference type="FunCoup" id="Q99456">
    <property type="interactions" value="144"/>
</dbReference>
<dbReference type="STRING" id="9606.ENSP00000251643"/>
<dbReference type="DrugBank" id="DB11157">
    <property type="generic name" value="Anthralin"/>
</dbReference>
<dbReference type="DrugBank" id="DB00400">
    <property type="generic name" value="Griseofulvin"/>
</dbReference>
<dbReference type="GlyGen" id="Q99456">
    <property type="glycosylation" value="1 site, 1 O-linked glycan (1 site)"/>
</dbReference>
<dbReference type="iPTMnet" id="Q99456"/>
<dbReference type="PhosphoSitePlus" id="Q99456"/>
<dbReference type="SwissPalm" id="Q99456"/>
<dbReference type="BioMuta" id="KRT12"/>
<dbReference type="DMDM" id="2497269"/>
<dbReference type="jPOST" id="Q99456"/>
<dbReference type="MassIVE" id="Q99456"/>
<dbReference type="PaxDb" id="9606-ENSP00000251643"/>
<dbReference type="PeptideAtlas" id="Q99456"/>
<dbReference type="PRIDE" id="Q99456"/>
<dbReference type="ProteomicsDB" id="78275"/>
<dbReference type="Antibodypedia" id="55294">
    <property type="antibodies" value="241 antibodies from 33 providers"/>
</dbReference>
<dbReference type="DNASU" id="3859"/>
<dbReference type="Ensembl" id="ENST00000251643.5">
    <property type="protein sequence ID" value="ENSP00000251643.4"/>
    <property type="gene ID" value="ENSG00000187242.6"/>
</dbReference>
<dbReference type="Ensembl" id="ENST00000572470.2">
    <property type="protein sequence ID" value="ENSP00000459559.2"/>
    <property type="gene ID" value="ENSG00000263243.2"/>
</dbReference>
<dbReference type="GeneID" id="3859"/>
<dbReference type="KEGG" id="hsa:3859"/>
<dbReference type="MANE-Select" id="ENST00000251643.5">
    <property type="protein sequence ID" value="ENSP00000251643.4"/>
    <property type="RefSeq nucleotide sequence ID" value="NM_000223.4"/>
    <property type="RefSeq protein sequence ID" value="NP_000214.1"/>
</dbReference>
<dbReference type="UCSC" id="uc002hvk.3">
    <property type="organism name" value="human"/>
</dbReference>
<dbReference type="AGR" id="HGNC:6414"/>
<dbReference type="CTD" id="3859"/>
<dbReference type="DisGeNET" id="3859"/>
<dbReference type="GeneCards" id="KRT12"/>
<dbReference type="HGNC" id="HGNC:6414">
    <property type="gene designation" value="KRT12"/>
</dbReference>
<dbReference type="HPA" id="ENSG00000187242">
    <property type="expression patterns" value="Not detected"/>
</dbReference>
<dbReference type="MalaCards" id="KRT12"/>
<dbReference type="MIM" id="122100">
    <property type="type" value="phenotype"/>
</dbReference>
<dbReference type="MIM" id="601687">
    <property type="type" value="gene"/>
</dbReference>
<dbReference type="neXtProt" id="NX_Q99456"/>
<dbReference type="OpenTargets" id="ENSG00000187242"/>
<dbReference type="Orphanet" id="98954">
    <property type="disease" value="Meesmann corneal dystrophy"/>
</dbReference>
<dbReference type="PharmGKB" id="PA30201"/>
<dbReference type="VEuPathDB" id="HostDB:ENSG00000187242"/>
<dbReference type="eggNOG" id="ENOG502QTM6">
    <property type="taxonomic scope" value="Eukaryota"/>
</dbReference>
<dbReference type="GeneTree" id="ENSGT00940000159382"/>
<dbReference type="HOGENOM" id="CLU_012560_8_3_1"/>
<dbReference type="InParanoid" id="Q99456"/>
<dbReference type="OMA" id="TEAGYCA"/>
<dbReference type="OrthoDB" id="2441647at2759"/>
<dbReference type="PAN-GO" id="Q99456">
    <property type="GO annotations" value="4 GO annotations based on evolutionary models"/>
</dbReference>
<dbReference type="PhylomeDB" id="Q99456"/>
<dbReference type="TreeFam" id="TF332742"/>
<dbReference type="PathwayCommons" id="Q99456"/>
<dbReference type="Reactome" id="R-HSA-6805567">
    <property type="pathway name" value="Keratinization"/>
</dbReference>
<dbReference type="Reactome" id="R-HSA-6809371">
    <property type="pathway name" value="Formation of the cornified envelope"/>
</dbReference>
<dbReference type="BioGRID-ORCS" id="3859">
    <property type="hits" value="12 hits in 1153 CRISPR screens"/>
</dbReference>
<dbReference type="ChiTaRS" id="KRT12">
    <property type="organism name" value="human"/>
</dbReference>
<dbReference type="GeneWiki" id="Keratin_12"/>
<dbReference type="GenomeRNAi" id="3859"/>
<dbReference type="Pharos" id="Q99456">
    <property type="development level" value="Tbio"/>
</dbReference>
<dbReference type="PRO" id="PR:Q99456"/>
<dbReference type="Proteomes" id="UP000005640">
    <property type="component" value="Chromosome 17"/>
</dbReference>
<dbReference type="RNAct" id="Q99456">
    <property type="molecule type" value="protein"/>
</dbReference>
<dbReference type="Bgee" id="ENSG00000187242">
    <property type="expression patterns" value="Expressed in primordial germ cell in gonad and 58 other cell types or tissues"/>
</dbReference>
<dbReference type="ExpressionAtlas" id="Q99456">
    <property type="expression patterns" value="baseline and differential"/>
</dbReference>
<dbReference type="GO" id="GO:0005856">
    <property type="term" value="C:cytoskeleton"/>
    <property type="evidence" value="ECO:0000318"/>
    <property type="project" value="GO_Central"/>
</dbReference>
<dbReference type="GO" id="GO:0005829">
    <property type="term" value="C:cytosol"/>
    <property type="evidence" value="ECO:0000304"/>
    <property type="project" value="Reactome"/>
</dbReference>
<dbReference type="GO" id="GO:0070062">
    <property type="term" value="C:extracellular exosome"/>
    <property type="evidence" value="ECO:0007005"/>
    <property type="project" value="UniProtKB"/>
</dbReference>
<dbReference type="GO" id="GO:0005882">
    <property type="term" value="C:intermediate filament"/>
    <property type="evidence" value="ECO:0007669"/>
    <property type="project" value="UniProtKB-KW"/>
</dbReference>
<dbReference type="GO" id="GO:0005198">
    <property type="term" value="F:structural molecule activity"/>
    <property type="evidence" value="ECO:0000303"/>
    <property type="project" value="ProtInc"/>
</dbReference>
<dbReference type="GO" id="GO:0061303">
    <property type="term" value="P:cornea development in camera-type eye"/>
    <property type="evidence" value="ECO:0000315"/>
    <property type="project" value="UniProtKB"/>
</dbReference>
<dbReference type="GO" id="GO:0030855">
    <property type="term" value="P:epithelial cell differentiation"/>
    <property type="evidence" value="ECO:0000318"/>
    <property type="project" value="GO_Central"/>
</dbReference>
<dbReference type="GO" id="GO:0045109">
    <property type="term" value="P:intermediate filament organization"/>
    <property type="evidence" value="ECO:0000318"/>
    <property type="project" value="GO_Central"/>
</dbReference>
<dbReference type="GO" id="GO:0002009">
    <property type="term" value="P:morphogenesis of an epithelium"/>
    <property type="evidence" value="ECO:0000315"/>
    <property type="project" value="UniProtKB"/>
</dbReference>
<dbReference type="GO" id="GO:0007601">
    <property type="term" value="P:visual perception"/>
    <property type="evidence" value="ECO:0000304"/>
    <property type="project" value="ProtInc"/>
</dbReference>
<dbReference type="FunFam" id="1.20.5.1160:FF:000002">
    <property type="entry name" value="Type I keratin 10"/>
    <property type="match status" value="1"/>
</dbReference>
<dbReference type="FunFam" id="1.20.5.170:FF:000002">
    <property type="entry name" value="Type I keratin KA11"/>
    <property type="match status" value="1"/>
</dbReference>
<dbReference type="FunFam" id="1.20.5.500:FF:000001">
    <property type="entry name" value="Type II keratin 23"/>
    <property type="match status" value="1"/>
</dbReference>
<dbReference type="Gene3D" id="1.20.5.170">
    <property type="match status" value="1"/>
</dbReference>
<dbReference type="Gene3D" id="1.20.5.500">
    <property type="entry name" value="Single helix bin"/>
    <property type="match status" value="1"/>
</dbReference>
<dbReference type="Gene3D" id="1.20.5.1160">
    <property type="entry name" value="Vasodilator-stimulated phosphoprotein"/>
    <property type="match status" value="1"/>
</dbReference>
<dbReference type="InterPro" id="IPR018039">
    <property type="entry name" value="IF_conserved"/>
</dbReference>
<dbReference type="InterPro" id="IPR039008">
    <property type="entry name" value="IF_rod_dom"/>
</dbReference>
<dbReference type="InterPro" id="IPR002957">
    <property type="entry name" value="Keratin_I"/>
</dbReference>
<dbReference type="PANTHER" id="PTHR23239">
    <property type="entry name" value="INTERMEDIATE FILAMENT"/>
    <property type="match status" value="1"/>
</dbReference>
<dbReference type="PANTHER" id="PTHR23239:SF369">
    <property type="entry name" value="KERATIN, TYPE I CYTOSKELETAL 12"/>
    <property type="match status" value="1"/>
</dbReference>
<dbReference type="Pfam" id="PF00038">
    <property type="entry name" value="Filament"/>
    <property type="match status" value="1"/>
</dbReference>
<dbReference type="PRINTS" id="PR01248">
    <property type="entry name" value="TYPE1KERATIN"/>
</dbReference>
<dbReference type="SMART" id="SM01391">
    <property type="entry name" value="Filament"/>
    <property type="match status" value="1"/>
</dbReference>
<dbReference type="SUPFAM" id="SSF64593">
    <property type="entry name" value="Intermediate filament protein, coiled coil region"/>
    <property type="match status" value="2"/>
</dbReference>
<dbReference type="PROSITE" id="PS00226">
    <property type="entry name" value="IF_ROD_1"/>
    <property type="match status" value="1"/>
</dbReference>
<dbReference type="PROSITE" id="PS51842">
    <property type="entry name" value="IF_ROD_2"/>
    <property type="match status" value="1"/>
</dbReference>
<comment type="function">
    <text evidence="16">Involved in corneal epithelium organization, integrity and corneal keratin expression.</text>
</comment>
<comment type="subunit">
    <text>Heterotetramer of two type I and two type II keratins. Keratin-3 associates with keratin-12.</text>
</comment>
<comment type="tissue specificity">
    <text evidence="16 18">Expressed in the corneal epithelium (at protein level).</text>
</comment>
<comment type="disease" evidence="3 4 5 6 7 8 9 10 11 12 13 14 15 16 17 19 20">
    <disease id="DI-01959">
        <name>Corneal dystrophy, Meesmann 1</name>
        <acronym>MECD1</acronym>
        <description>A form of Meesmann corneal dystrophy, a corneal disease characterized by fragility of the anterior corneal epithelium. Histological examination shows a disorganized and thickened epithelium with widespread cytoplasmic vacuolation and numerous small, round, debris-laden intraepithelial cysts. Patients are usually asymptomatic until adulthood when rupture of the corneal microcysts may cause erosions, producing clinical symptoms such as photophobia, contact lens intolerance and intermittent diminution of visual acuity. Rarely, subepithelial scarring causes irregular corneal astigmatism and permanent visual impairment. MECD1 inheritance is autosomal dominant.</description>
        <dbReference type="MIM" id="122100"/>
    </disease>
    <text>The disease is caused by variants affecting the gene represented in this entry.</text>
</comment>
<comment type="miscellaneous">
    <text>There are two types of cytoskeletal and microfibrillar keratin: I (acidic; 40-55 kDa) and II (neutral to basic; 56-70 kDa).</text>
</comment>
<comment type="similarity">
    <text evidence="1">Belongs to the intermediate filament family.</text>
</comment>
<comment type="online information" name="Wikipedia">
    <link uri="https://en.wikipedia.org/wiki/Keratin_12"/>
    <text>Keratin-12 entry</text>
</comment>
<reference key="1">
    <citation type="journal article" date="1996" name="Invest. Ophthalmol. Vis. Sci.">
        <title>A gene expression profile of human corneal epithelium and the isolation of human keratin 12 cDNA.</title>
        <authorList>
            <person name="Nishida K."/>
            <person name="Adachi W."/>
            <person name="Shimizu-Matsumoto A."/>
            <person name="Kinoshita S."/>
            <person name="Mizuno K."/>
            <person name="Matsubara K."/>
            <person name="Okubo K."/>
        </authorList>
    </citation>
    <scope>NUCLEOTIDE SEQUENCE [MRNA]</scope>
    <scope>TISSUE SPECIFICITY</scope>
    <source>
        <tissue>Cornea</tissue>
    </source>
</reference>
<reference key="2">
    <citation type="journal article" date="1997" name="Am. J. Hum. Genet.">
        <title>Isolation and chromosomal localization of a cornea-specific human keratin 12 gene and detection of four mutations in Meesmann corneal epithelial dystrophy.</title>
        <authorList>
            <person name="Nishida K."/>
            <person name="Honma Y."/>
            <person name="Dota A."/>
            <person name="Kawasaki S."/>
            <person name="Adachi W."/>
            <person name="Nakamura T."/>
            <person name="Quantock A.J."/>
            <person name="Hosotani H."/>
            <person name="Yamamoto S."/>
            <person name="Okada M."/>
            <person name="Shimomura Y."/>
            <person name="Kinoshita S."/>
        </authorList>
    </citation>
    <scope>NUCLEOTIDE SEQUENCE [GENOMIC DNA]</scope>
    <scope>VARIANTS MECD1 GLY-135; ILE-135; ARG-140 AND ASP-429</scope>
</reference>
<reference key="3">
    <citation type="journal article" date="2000" name="Exp. Eye Res.">
        <title>Molecular genetics of Meesmann's corneal dystrophy: ancestral and novel mutations in keratin 12 (K12) and complete sequence of the human KRT12 gene.</title>
        <authorList>
            <person name="Corden L.D."/>
            <person name="Swensson O."/>
            <person name="Swensson B."/>
            <person name="Smith F.J.D."/>
            <person name="Rochels R."/>
            <person name="Uitto J."/>
            <person name="McLean W.H.I."/>
        </authorList>
    </citation>
    <scope>NUCLEOTIDE SEQUENCE [MRNA]</scope>
    <scope>VARIANTS MECD1 THR-129 AND THR-135</scope>
    <scope>VARIANT TRP-20</scope>
</reference>
<reference key="4">
    <citation type="journal article" date="2004" name="Nat. Genet.">
        <title>Complete sequencing and characterization of 21,243 full-length human cDNAs.</title>
        <authorList>
            <person name="Ota T."/>
            <person name="Suzuki Y."/>
            <person name="Nishikawa T."/>
            <person name="Otsuki T."/>
            <person name="Sugiyama T."/>
            <person name="Irie R."/>
            <person name="Wakamatsu A."/>
            <person name="Hayashi K."/>
            <person name="Sato H."/>
            <person name="Nagai K."/>
            <person name="Kimura K."/>
            <person name="Makita H."/>
            <person name="Sekine M."/>
            <person name="Obayashi M."/>
            <person name="Nishi T."/>
            <person name="Shibahara T."/>
            <person name="Tanaka T."/>
            <person name="Ishii S."/>
            <person name="Yamamoto J."/>
            <person name="Saito K."/>
            <person name="Kawai Y."/>
            <person name="Isono Y."/>
            <person name="Nakamura Y."/>
            <person name="Nagahari K."/>
            <person name="Murakami K."/>
            <person name="Yasuda T."/>
            <person name="Iwayanagi T."/>
            <person name="Wagatsuma M."/>
            <person name="Shiratori A."/>
            <person name="Sudo H."/>
            <person name="Hosoiri T."/>
            <person name="Kaku Y."/>
            <person name="Kodaira H."/>
            <person name="Kondo H."/>
            <person name="Sugawara M."/>
            <person name="Takahashi M."/>
            <person name="Kanda K."/>
            <person name="Yokoi T."/>
            <person name="Furuya T."/>
            <person name="Kikkawa E."/>
            <person name="Omura Y."/>
            <person name="Abe K."/>
            <person name="Kamihara K."/>
            <person name="Katsuta N."/>
            <person name="Sato K."/>
            <person name="Tanikawa M."/>
            <person name="Yamazaki M."/>
            <person name="Ninomiya K."/>
            <person name="Ishibashi T."/>
            <person name="Yamashita H."/>
            <person name="Murakawa K."/>
            <person name="Fujimori K."/>
            <person name="Tanai H."/>
            <person name="Kimata M."/>
            <person name="Watanabe M."/>
            <person name="Hiraoka S."/>
            <person name="Chiba Y."/>
            <person name="Ishida S."/>
            <person name="Ono Y."/>
            <person name="Takiguchi S."/>
            <person name="Watanabe S."/>
            <person name="Yosida M."/>
            <person name="Hotuta T."/>
            <person name="Kusano J."/>
            <person name="Kanehori K."/>
            <person name="Takahashi-Fujii A."/>
            <person name="Hara H."/>
            <person name="Tanase T.-O."/>
            <person name="Nomura Y."/>
            <person name="Togiya S."/>
            <person name="Komai F."/>
            <person name="Hara R."/>
            <person name="Takeuchi K."/>
            <person name="Arita M."/>
            <person name="Imose N."/>
            <person name="Musashino K."/>
            <person name="Yuuki H."/>
            <person name="Oshima A."/>
            <person name="Sasaki N."/>
            <person name="Aotsuka S."/>
            <person name="Yoshikawa Y."/>
            <person name="Matsunawa H."/>
            <person name="Ichihara T."/>
            <person name="Shiohata N."/>
            <person name="Sano S."/>
            <person name="Moriya S."/>
            <person name="Momiyama H."/>
            <person name="Satoh N."/>
            <person name="Takami S."/>
            <person name="Terashima Y."/>
            <person name="Suzuki O."/>
            <person name="Nakagawa S."/>
            <person name="Senoh A."/>
            <person name="Mizoguchi H."/>
            <person name="Goto Y."/>
            <person name="Shimizu F."/>
            <person name="Wakebe H."/>
            <person name="Hishigaki H."/>
            <person name="Watanabe T."/>
            <person name="Sugiyama A."/>
            <person name="Takemoto M."/>
            <person name="Kawakami B."/>
            <person name="Yamazaki M."/>
            <person name="Watanabe K."/>
            <person name="Kumagai A."/>
            <person name="Itakura S."/>
            <person name="Fukuzumi Y."/>
            <person name="Fujimori Y."/>
            <person name="Komiyama M."/>
            <person name="Tashiro H."/>
            <person name="Tanigami A."/>
            <person name="Fujiwara T."/>
            <person name="Ono T."/>
            <person name="Yamada K."/>
            <person name="Fujii Y."/>
            <person name="Ozaki K."/>
            <person name="Hirao M."/>
            <person name="Ohmori Y."/>
            <person name="Kawabata A."/>
            <person name="Hikiji T."/>
            <person name="Kobatake N."/>
            <person name="Inagaki H."/>
            <person name="Ikema Y."/>
            <person name="Okamoto S."/>
            <person name="Okitani R."/>
            <person name="Kawakami T."/>
            <person name="Noguchi S."/>
            <person name="Itoh T."/>
            <person name="Shigeta K."/>
            <person name="Senba T."/>
            <person name="Matsumura K."/>
            <person name="Nakajima Y."/>
            <person name="Mizuno T."/>
            <person name="Morinaga M."/>
            <person name="Sasaki M."/>
            <person name="Togashi T."/>
            <person name="Oyama M."/>
            <person name="Hata H."/>
            <person name="Watanabe M."/>
            <person name="Komatsu T."/>
            <person name="Mizushima-Sugano J."/>
            <person name="Satoh T."/>
            <person name="Shirai Y."/>
            <person name="Takahashi Y."/>
            <person name="Nakagawa K."/>
            <person name="Okumura K."/>
            <person name="Nagase T."/>
            <person name="Nomura N."/>
            <person name="Kikuchi H."/>
            <person name="Masuho Y."/>
            <person name="Yamashita R."/>
            <person name="Nakai K."/>
            <person name="Yada T."/>
            <person name="Nakamura Y."/>
            <person name="Ohara O."/>
            <person name="Isogai T."/>
            <person name="Sugano S."/>
        </authorList>
    </citation>
    <scope>NUCLEOTIDE SEQUENCE [LARGE SCALE MRNA]</scope>
</reference>
<reference key="5">
    <citation type="submission" date="2005-07" db="EMBL/GenBank/DDBJ databases">
        <authorList>
            <person name="Mural R.J."/>
            <person name="Istrail S."/>
            <person name="Sutton G.G."/>
            <person name="Florea L."/>
            <person name="Halpern A.L."/>
            <person name="Mobarry C.M."/>
            <person name="Lippert R."/>
            <person name="Walenz B."/>
            <person name="Shatkay H."/>
            <person name="Dew I."/>
            <person name="Miller J.R."/>
            <person name="Flanigan M.J."/>
            <person name="Edwards N.J."/>
            <person name="Bolanos R."/>
            <person name="Fasulo D."/>
            <person name="Halldorsson B.V."/>
            <person name="Hannenhalli S."/>
            <person name="Turner R."/>
            <person name="Yooseph S."/>
            <person name="Lu F."/>
            <person name="Nusskern D.R."/>
            <person name="Shue B.C."/>
            <person name="Zheng X.H."/>
            <person name="Zhong F."/>
            <person name="Delcher A.L."/>
            <person name="Huson D.H."/>
            <person name="Kravitz S.A."/>
            <person name="Mouchard L."/>
            <person name="Reinert K."/>
            <person name="Remington K.A."/>
            <person name="Clark A.G."/>
            <person name="Waterman M.S."/>
            <person name="Eichler E.E."/>
            <person name="Adams M.D."/>
            <person name="Hunkapiller M.W."/>
            <person name="Myers E.W."/>
            <person name="Venter J.C."/>
        </authorList>
    </citation>
    <scope>NUCLEOTIDE SEQUENCE [LARGE SCALE GENOMIC DNA]</scope>
</reference>
<reference key="6">
    <citation type="journal article" date="2003" name="Nat. Biotechnol.">
        <title>Exploring proteomes and analyzing protein processing by mass spectrometric identification of sorted N-terminal peptides.</title>
        <authorList>
            <person name="Gevaert K."/>
            <person name="Goethals M."/>
            <person name="Martens L."/>
            <person name="Van Damme J."/>
            <person name="Staes A."/>
            <person name="Thomas G.R."/>
            <person name="Vandekerckhove J."/>
        </authorList>
    </citation>
    <scope>PROTEIN SEQUENCE OF 21-31</scope>
    <source>
        <tissue>Platelet</tissue>
    </source>
</reference>
<reference key="7">
    <citation type="journal article" date="2011" name="BMC Syst. Biol.">
        <title>Initial characterization of the human central proteome.</title>
        <authorList>
            <person name="Burkard T.R."/>
            <person name="Planyavsky M."/>
            <person name="Kaupe I."/>
            <person name="Breitwieser F.P."/>
            <person name="Buerckstuemmer T."/>
            <person name="Bennett K.L."/>
            <person name="Superti-Furga G."/>
            <person name="Colinge J."/>
        </authorList>
    </citation>
    <scope>IDENTIFICATION BY MASS SPECTROMETRY [LARGE SCALE ANALYSIS]</scope>
</reference>
<reference key="8">
    <citation type="journal article" date="2016" name="Hum. Mol. Genet.">
        <title>Keratin 12 missense mutation induces the unfolded protein response and apoptosis in Meesmann epithelial corneal dystrophy.</title>
        <authorList>
            <person name="Allen E.H."/>
            <person name="Courtney D.G."/>
            <person name="Atkinson S.D."/>
            <person name="Moore J.E."/>
            <person name="Mairs L."/>
            <person name="Poulsen E.T."/>
            <person name="Schiroli D."/>
            <person name="Maurizi E."/>
            <person name="Cole C."/>
            <person name="Hickerson R.P."/>
            <person name="James J."/>
            <person name="Murgatroyd H."/>
            <person name="Smith F.J."/>
            <person name="MacEwen C."/>
            <person name="Enghild J.J."/>
            <person name="Nesbit M.A."/>
            <person name="Leslie Pedrioli D.M."/>
            <person name="McLean W.H."/>
            <person name="Moore C.B."/>
        </authorList>
    </citation>
    <scope>FUNCTION</scope>
    <scope>TISSUE SPECIFICITY</scope>
    <scope>CHARACTERIZATION OF VARIANT MECD1 PRO-132</scope>
</reference>
<reference key="9">
    <citation type="journal article" date="1997" name="Nat. Genet.">
        <title>Mutations in cornea-specific keratin K3 or K12 genes cause Meesmann's corneal dystrophy.</title>
        <authorList>
            <person name="Irvine A.D."/>
            <person name="Corden L.D."/>
            <person name="Swensson O."/>
            <person name="Swensson B."/>
            <person name="Moore J.E."/>
            <person name="Frazer D.G."/>
            <person name="Smith F.J.D."/>
            <person name="Knowlton R.G."/>
            <person name="Christophers E."/>
            <person name="Rochels R."/>
            <person name="Uitto J."/>
            <person name="McLean W.H.I."/>
        </authorList>
    </citation>
    <scope>VARIANTS MECD1 THR-135 AND LEU-143</scope>
</reference>
<reference key="10">
    <citation type="journal article" date="1999" name="Am. J. Ophthalmol.">
        <title>A novel mutation in the helix termination motif of keratin K12 in a US family with Meesmann corneal dystrophy.</title>
        <authorList>
            <person name="Coleman C.M."/>
            <person name="Hannush S."/>
            <person name="Covello S.P."/>
            <person name="Smith F.J."/>
            <person name="Uitto J."/>
            <person name="McLean W.H."/>
        </authorList>
    </citation>
    <scope>VARIANT MECD1 VAL-426</scope>
</reference>
<reference key="11">
    <citation type="journal article" date="2000" name="Br. J. Ophthalmol.">
        <title>A novel keratin 12 mutation in a German kindred with Meesmann's corneal dystrophy.</title>
        <authorList>
            <person name="Corden L.D."/>
            <person name="Swensson O."/>
            <person name="Swensson B."/>
            <person name="Rochels R."/>
            <person name="Wannke B."/>
            <person name="Thiel H.J."/>
            <person name="McLean W.H.I."/>
        </authorList>
    </citation>
    <scope>VARIANT MECD1 PRO-130</scope>
</reference>
<reference key="12">
    <citation type="journal article" date="2002" name="Jpn. J. Ophthalmol.">
        <title>Heterozygous Ala137Pro mutation in keratin 12 gene found in Japanese with Meesmann's corneal dystrophy.</title>
        <authorList>
            <person name="Takahashi K."/>
            <person name="Takahashi K."/>
            <person name="Murakami A."/>
            <person name="Okisaka S."/>
            <person name="Kimura T."/>
            <person name="Kanai A."/>
        </authorList>
    </citation>
    <scope>VARIANT MECD1 PRO-137</scope>
</reference>
<reference key="13">
    <citation type="journal article" date="2004" name="Br. J. Ophthalmol.">
        <title>A novel arginine substitution mutation in 1A domain and a novel 27 bp insertion mutation in 2B domain of keratin 12 gene associated with Meesmann's corneal dystrophy.</title>
        <authorList>
            <person name="Yoon M.K."/>
            <person name="Warren J.F."/>
            <person name="Holsclaw D.S."/>
            <person name="Gritz D.C."/>
            <person name="Margolis T.P."/>
        </authorList>
    </citation>
    <scope>VARIANTS MECD1 SER-135 AND ILE-SER-ASN-LEU-GLU-ALA-GLN-LEU-LEU-399 INS</scope>
</reference>
<reference key="14">
    <citation type="journal article" date="2005" name="Cornea">
        <title>Novel mutations in the helix termination motif of keratin 3 and keratin 12 in 2 Taiwanese families with Meesmann corneal dystrophy.</title>
        <authorList>
            <person name="Chen Y.T."/>
            <person name="Tseng S.H."/>
            <person name="Chao S.C."/>
        </authorList>
    </citation>
    <scope>VARIANT MECD1 CYS-429</scope>
</reference>
<reference key="15">
    <citation type="journal article" date="2005" name="Ophthalmic Genet.">
        <title>Meesmann corneal dystrophy (MECD): report of 2 families and a novel mutation in the cornea specific keratin 12 (KRT12) gene.</title>
        <authorList>
            <person name="Nichini O."/>
            <person name="Manzi V."/>
            <person name="Munier F.L."/>
            <person name="Schorderet D.F."/>
        </authorList>
    </citation>
    <scope>VARIANTS MECD1 THR-129 AND SER-426</scope>
</reference>
<reference key="16">
    <citation type="journal article" date="2007" name="Mol. Vis.">
        <title>A novel mutation of the Keratin 12 gene responsible for a severe phenotype of Meesmann's corneal dystrophy.</title>
        <authorList>
            <person name="Sullivan L.S."/>
            <person name="Baylin E.B."/>
            <person name="Font R."/>
            <person name="Daiger S.P."/>
            <person name="Pepose J.S."/>
            <person name="Clinch T.E."/>
            <person name="Nakamura H."/>
            <person name="Zhao X.C."/>
            <person name="Yee R.W."/>
        </authorList>
    </citation>
    <scope>VARIANT MECD1 PRO-430</scope>
</reference>
<reference key="17">
    <citation type="journal article" date="2008" name="Cornea">
        <title>A novel mutation as the basis for asymptomatic meesmann dystrophy in a Danish family.</title>
        <authorList>
            <person name="Nielsen K."/>
            <person name="Orntoft T."/>
            <person name="Hjortdal J."/>
            <person name="Rasmussen T."/>
            <person name="Ehlers N."/>
        </authorList>
    </citation>
    <scope>VARIANTS SER-15 AND TRP-20</scope>
    <scope>VARIANT MECD1 LEU-143</scope>
</reference>
<reference key="18">
    <citation type="journal article" date="2008" name="Jpn. J. Ophthalmol.">
        <title>A novel mutation in the cornea-specific keratin 12 gene in Meesmann corneal dystrophy.</title>
        <authorList>
            <person name="Seto T."/>
            <person name="Fujiki K."/>
            <person name="Kishishita H."/>
            <person name="Fujimaki T."/>
            <person name="Murakami A."/>
            <person name="Kanai A."/>
        </authorList>
    </citation>
    <scope>VARIANT MECD1 ARG-433</scope>
</reference>
<reference key="19">
    <citation type="journal article" date="2010" name="Mol. Vis.">
        <title>Identification of a novel mutation in the cornea specific keratin 12 gene causing Meesmann's corneal dystrophy in a German family.</title>
        <authorList>
            <person name="Clausen I."/>
            <person name="Duncker G.I."/>
            <person name="Grunauer-Kloevekorn C."/>
        </authorList>
    </citation>
    <scope>VARIANT SER-15</scope>
    <scope>VARIANT MECD1 VAL-129</scope>
</reference>
<reference key="20">
    <citation type="journal article" date="2013" name="Eye">
        <title>Severe Meesmann's epithelial corneal dystrophy phenotype due to a missense mutation in the helix-initiation motif of keratin 12.</title>
        <authorList>
            <person name="Hassan H."/>
            <person name="Thaung C."/>
            <person name="Ebenezer N.D."/>
            <person name="Larkin G."/>
            <person name="Hardcastle A.J."/>
            <person name="Tuft S.J."/>
        </authorList>
    </citation>
    <scope>VARIANT MECD1 PRO-132</scope>
</reference>
<reference key="21">
    <citation type="journal article" date="2014" name="Am. J. Ophthalmol.">
        <title>KRT12 mutations and in vivo confocal microscopy in two Japanese families with Meesmann corneal dystrophy.</title>
        <authorList>
            <person name="Ogasawara M."/>
            <person name="Matsumoto Y."/>
            <person name="Hayashi T."/>
            <person name="Ohno K."/>
            <person name="Yamada H."/>
            <person name="Kawakita T."/>
            <person name="Dogru M."/>
            <person name="Shimazaki J."/>
            <person name="Tsubota K."/>
            <person name="Tsuneoka H."/>
        </authorList>
    </citation>
    <scope>VARIANT MECD1 GLN-140</scope>
</reference>
<reference key="22">
    <citation type="journal article" date="2019" name="Jpn. J. Ophthalmol.">
        <title>In vivo histology and p.L132V mutation in KRT12 gene in Japanese patients with Meesmann corneal dystrophy.</title>
        <authorList>
            <person name="Nishino T."/>
            <person name="Kobayashi A."/>
            <person name="Mori N."/>
            <person name="Masaki T."/>
            <person name="Yokogawa H."/>
            <person name="Fujiki K."/>
            <person name="Yanagawa A."/>
            <person name="Murakami A."/>
            <person name="Sugiyama K."/>
        </authorList>
    </citation>
    <scope>VARIANTS MECD1 VAL-132 AND ASN-248</scope>
</reference>
<name>K1C12_HUMAN</name>
<keyword id="KW-0175">Coiled coil</keyword>
<keyword id="KW-1212">Corneal dystrophy</keyword>
<keyword id="KW-0903">Direct protein sequencing</keyword>
<keyword id="KW-0225">Disease variant</keyword>
<keyword id="KW-0403">Intermediate filament</keyword>
<keyword id="KW-0416">Keratin</keyword>
<keyword id="KW-1267">Proteomics identification</keyword>
<keyword id="KW-1185">Reference proteome</keyword>
<evidence type="ECO:0000255" key="1">
    <source>
        <dbReference type="PROSITE-ProRule" id="PRU01188"/>
    </source>
</evidence>
<evidence type="ECO:0000256" key="2">
    <source>
        <dbReference type="SAM" id="MobiDB-lite"/>
    </source>
</evidence>
<evidence type="ECO:0000269" key="3">
    <source>
    </source>
</evidence>
<evidence type="ECO:0000269" key="4">
    <source>
    </source>
</evidence>
<evidence type="ECO:0000269" key="5">
    <source>
    </source>
</evidence>
<evidence type="ECO:0000269" key="6">
    <source>
    </source>
</evidence>
<evidence type="ECO:0000269" key="7">
    <source>
    </source>
</evidence>
<evidence type="ECO:0000269" key="8">
    <source>
    </source>
</evidence>
<evidence type="ECO:0000269" key="9">
    <source>
    </source>
</evidence>
<evidence type="ECO:0000269" key="10">
    <source>
    </source>
</evidence>
<evidence type="ECO:0000269" key="11">
    <source>
    </source>
</evidence>
<evidence type="ECO:0000269" key="12">
    <source>
    </source>
</evidence>
<evidence type="ECO:0000269" key="13">
    <source>
    </source>
</evidence>
<evidence type="ECO:0000269" key="14">
    <source>
    </source>
</evidence>
<evidence type="ECO:0000269" key="15">
    <source>
    </source>
</evidence>
<evidence type="ECO:0000269" key="16">
    <source>
    </source>
</evidence>
<evidence type="ECO:0000269" key="17">
    <source>
    </source>
</evidence>
<evidence type="ECO:0000269" key="18">
    <source>
    </source>
</evidence>
<evidence type="ECO:0000269" key="19">
    <source>
    </source>
</evidence>
<evidence type="ECO:0000269" key="20">
    <source>
    </source>
</evidence>